<keyword id="KW-0007">Acetylation</keyword>
<keyword id="KW-0238">DNA-binding</keyword>
<keyword id="KW-0945">Host-virus interaction</keyword>
<keyword id="KW-1090">Inhibition of host innate immune response by virus</keyword>
<keyword id="KW-1092">Inhibition of host IRF3 by virus</keyword>
<keyword id="KW-1113">Inhibition of host RLR pathway by virus</keyword>
<keyword id="KW-0426">Late protein</keyword>
<keyword id="KW-1185">Reference proteome</keyword>
<keyword id="KW-0899">Viral immunoevasion</keyword>
<keyword id="KW-1188">Viral release from host cell</keyword>
<keyword id="KW-0946">Virion</keyword>
<organismHost>
    <name type="scientific">Ornithodoros</name>
    <name type="common">relapsing fever ticks</name>
    <dbReference type="NCBI Taxonomy" id="6937"/>
</organismHost>
<organismHost>
    <name type="scientific">Sus scrofa</name>
    <name type="common">Pig</name>
    <dbReference type="NCBI Taxonomy" id="9823"/>
</organismHost>
<gene>
    <name type="ordered locus">Ba71V-133</name>
    <name type="ORF">E120R</name>
</gene>
<reference key="1">
    <citation type="journal article" date="1995" name="Virology">
        <title>Analysis of the complete nucleotide sequence of African swine fever virus.</title>
        <authorList>
            <person name="Yanez R.J."/>
            <person name="Rodriguez J.M."/>
            <person name="Nogal M.L."/>
            <person name="Yuste L."/>
            <person name="Enriquez C."/>
            <person name="Rodriguez J.F."/>
            <person name="Vinuela E."/>
        </authorList>
    </citation>
    <scope>NUCLEOTIDE SEQUENCE [LARGE SCALE GENOMIC DNA]</scope>
</reference>
<reference key="2">
    <citation type="journal article" date="1997" name="Virology">
        <title>Characterization of the African swine fever virus structural protein p14.5: a DNA binding protein.</title>
        <authorList>
            <person name="Martinez-Pomares L."/>
            <person name="Simon-Mateo C."/>
            <person name="Lopez-Otin C."/>
            <person name="Vinuela E."/>
        </authorList>
    </citation>
    <scope>DNA-BINDING</scope>
    <scope>INDUCTION</scope>
    <scope>SUBCELLULAR LOCATION</scope>
    <scope>FUNCTION</scope>
</reference>
<reference key="3">
    <citation type="journal article" date="2001" name="J. Virol.">
        <title>African swine fever virus structural protein pE120R is essential for virus transport from assembly sites to plasma membrane but not for infectivity.</title>
        <authorList>
            <person name="Andres G."/>
            <person name="Garcia-Escudero R."/>
            <person name="Vinuela E."/>
            <person name="Salas M.L."/>
            <person name="Rodriguez J.M."/>
        </authorList>
    </citation>
    <scope>FUNCTION</scope>
    <scope>SUBCELLULAR LOCATION</scope>
    <scope>INTERACTION WITH THE MAJOR CAPSID PROTEIN</scope>
</reference>
<reference key="4">
    <citation type="journal article" date="2007" name="Virus Genes">
        <title>Protein pE120R of African swine fever virus is post-translationally acetylated as revealed by post-source decay MALDI mass spectrometry.</title>
        <authorList>
            <person name="Alfonso P."/>
            <person name="Quetglas J.I."/>
            <person name="Escribano J.M."/>
            <person name="Alonso C."/>
        </authorList>
    </citation>
    <scope>ACETYLATION AT ALA-2</scope>
</reference>
<reference key="5">
    <citation type="journal article" date="2018" name="J. Virol.">
        <title>A Proteomic Atlas of the African Swine Fever Virus Particle.</title>
        <authorList>
            <person name="Alejo A."/>
            <person name="Matamoros T."/>
            <person name="Guerra M."/>
            <person name="Andres G."/>
        </authorList>
    </citation>
    <scope>SUBCELLULAR LOCATION</scope>
</reference>
<reference key="6">
    <citation type="journal article" date="2020" name="Biochem. Soc. Trans.">
        <title>Transcriptome view of a killer: African swine fever virus.</title>
        <authorList>
            <person name="Cackett G."/>
            <person name="Sykora M."/>
            <person name="Werner F."/>
        </authorList>
    </citation>
    <scope>REVIEW</scope>
</reference>
<reference key="7">
    <citation type="journal article" date="2020" name="J. Virol.">
        <title>The African Swine Fever Virus Transcriptome.</title>
        <authorList>
            <person name="Cackett G."/>
            <person name="Matelska D."/>
            <person name="Sykora M."/>
            <person name="Portugal R."/>
            <person name="Malecki M."/>
            <person name="Baehler J."/>
            <person name="Dixon L."/>
            <person name="Werner F."/>
        </authorList>
    </citation>
    <scope>INDUCTION</scope>
</reference>
<reference key="8">
    <citation type="journal article" date="2021" name="J. Virol.">
        <title>African swine fever virus E120R protein inhibits interferon-beta production by interacting with IRF3 to block its activation.</title>
        <authorList>
            <person name="Liu H."/>
            <person name="Zhu Z."/>
            <person name="Feng T."/>
            <person name="Ma Z."/>
            <person name="Xue Q."/>
            <person name="Wu P."/>
            <person name="Li P."/>
            <person name="Li S."/>
            <person name="Yang F."/>
            <person name="Cao W."/>
            <person name="Xue Z."/>
            <person name="Chen H."/>
            <person name="Liu X."/>
            <person name="Zheng H."/>
        </authorList>
    </citation>
    <scope>FUNCTION</scope>
    <scope>INTERACTION WITH HOST IRF3</scope>
    <scope>MUTAGENESIS OF 70-ASP-ILE-71</scope>
    <scope>INDUCTION</scope>
</reference>
<reference key="9">
    <citation type="journal article" date="2021" name="Viruses">
        <title>Unpicking the Secrets of African Swine Fever Viral Replication Sites.</title>
        <authorList>
            <person name="Aicher S.M."/>
            <person name="Monaghan P."/>
            <person name="Netherton C.L."/>
            <person name="Hawes P.C."/>
        </authorList>
    </citation>
    <scope>SUBCELLULAR LOCATION</scope>
</reference>
<dbReference type="EMBL" id="U18466">
    <property type="protein sequence ID" value="AAA65361.1"/>
    <property type="molecule type" value="Genomic_DNA"/>
</dbReference>
<dbReference type="RefSeq" id="NP_042825.1">
    <property type="nucleotide sequence ID" value="NC_001659.2"/>
</dbReference>
<dbReference type="iPTMnet" id="Q65201"/>
<dbReference type="GeneID" id="22220361"/>
<dbReference type="KEGG" id="vg:22220361"/>
<dbReference type="Proteomes" id="UP000000624">
    <property type="component" value="Segment"/>
</dbReference>
<dbReference type="GO" id="GO:0044423">
    <property type="term" value="C:virion component"/>
    <property type="evidence" value="ECO:0007669"/>
    <property type="project" value="UniProtKB-KW"/>
</dbReference>
<dbReference type="GO" id="GO:0003677">
    <property type="term" value="F:DNA binding"/>
    <property type="evidence" value="ECO:0007669"/>
    <property type="project" value="UniProtKB-KW"/>
</dbReference>
<dbReference type="GO" id="GO:0039548">
    <property type="term" value="P:symbiont-mediated suppression of host cytoplasmic pattern recognition receptor signaling pathway via inhibition of IRF3 activity"/>
    <property type="evidence" value="ECO:0007669"/>
    <property type="project" value="UniProtKB-KW"/>
</dbReference>
<accession>Q65201</accession>
<protein>
    <recommendedName>
        <fullName>Protein p14.5</fullName>
    </recommendedName>
    <alternativeName>
        <fullName>pE120R</fullName>
    </alternativeName>
</protein>
<proteinExistence type="evidence at protein level"/>
<sequence length="120" mass="13591">MADFNSPIQYLKEDSRDRTSIGSLEYDENSDTIIPSFAAGLEDFEPIPSPTTSTSLYSQLTHNMEKIAEEEDINFLHDTREFTSLVPDKADNKPEDDEESGAKPKKKKHLFPKLSSHKSK</sequence>
<feature type="initiator methionine" description="Removed" evidence="8">
    <location>
        <position position="1"/>
    </location>
</feature>
<feature type="chain" id="PRO_0000373396" description="Protein p14.5">
    <location>
        <begin position="2"/>
        <end position="120"/>
    </location>
</feature>
<feature type="region of interest" description="Disordered" evidence="1">
    <location>
        <begin position="1"/>
        <end position="27"/>
    </location>
</feature>
<feature type="region of interest" description="Disordered" evidence="1">
    <location>
        <begin position="80"/>
        <end position="120"/>
    </location>
</feature>
<feature type="compositionally biased region" description="Basic residues" evidence="1">
    <location>
        <begin position="103"/>
        <end position="120"/>
    </location>
</feature>
<feature type="modified residue" description="N-acetylalanine; by host" evidence="3">
    <location>
        <position position="2"/>
    </location>
</feature>
<feature type="mutagenesis site" description="Complete loss of interaction with host IRF3 and no unhibition of interferon production." evidence="6">
    <original>EE</original>
    <variation>AA</variation>
    <location>
        <begin position="70"/>
        <end position="71"/>
    </location>
</feature>
<comment type="function">
    <text evidence="2 6 7">Structural protein required for transport of intracellular particles from the assembly sites to the plasma membrane (PubMed:11435554). Binds to both ssDNA and dsDNA (PubMed:9123862). Suppressed the activation of the cGAS/STING pathway by interfering with the recruitment of IRF3 to TBK1, which in turn suppresses IRF3 phosphorylation, decreasing interferon production (PubMed:34190598).</text>
</comment>
<comment type="subunit">
    <text evidence="2 6">Interacts with the major capsid protein (PubMed:11435554). Interacts with host IRF3; this interaction interferes with the recruitment of IRF3 to TBK1 (PubMed:34190598).</text>
</comment>
<comment type="subcellular location">
    <subcellularLocation>
        <location evidence="2 4 7">Virion</location>
    </subcellularLocation>
    <text evidence="9">Localizes at the surface of the intracellular virion.</text>
</comment>
<comment type="induction">
    <text evidence="5 6 7">Expressed in the late phase of the viral replicative cycle.</text>
</comment>
<comment type="PTM">
    <text evidence="3">Acetylated.</text>
</comment>
<comment type="similarity">
    <text evidence="8">Belongs to the asfivirus structural protein p14.5 family.</text>
</comment>
<organism>
    <name type="scientific">African swine fever virus (strain Badajoz 1971 Vero-adapted)</name>
    <name type="common">Ba71V</name>
    <name type="synonym">ASFV</name>
    <dbReference type="NCBI Taxonomy" id="10498"/>
    <lineage>
        <taxon>Viruses</taxon>
        <taxon>Varidnaviria</taxon>
        <taxon>Bamfordvirae</taxon>
        <taxon>Nucleocytoviricota</taxon>
        <taxon>Pokkesviricetes</taxon>
        <taxon>Asfuvirales</taxon>
        <taxon>Asfarviridae</taxon>
        <taxon>Asfivirus</taxon>
        <taxon>African swine fever virus</taxon>
    </lineage>
</organism>
<evidence type="ECO:0000256" key="1">
    <source>
        <dbReference type="SAM" id="MobiDB-lite"/>
    </source>
</evidence>
<evidence type="ECO:0000269" key="2">
    <source>
    </source>
</evidence>
<evidence type="ECO:0000269" key="3">
    <source>
    </source>
</evidence>
<evidence type="ECO:0000269" key="4">
    <source>
    </source>
</evidence>
<evidence type="ECO:0000269" key="5">
    <source>
    </source>
</evidence>
<evidence type="ECO:0000269" key="6">
    <source>
    </source>
</evidence>
<evidence type="ECO:0000269" key="7">
    <source>
    </source>
</evidence>
<evidence type="ECO:0000305" key="8"/>
<evidence type="ECO:0000305" key="9">
    <source>
    </source>
</evidence>
<name>P14_ASFB7</name>